<protein>
    <recommendedName>
        <fullName evidence="1">Small ribosomal subunit protein RACK1</fullName>
    </recommendedName>
    <alternativeName>
        <fullName>Guanine nucleotide-binding protein subunit beta-like protein</fullName>
    </alternativeName>
</protein>
<organism>
    <name type="scientific">Glycine max</name>
    <name type="common">Soybean</name>
    <name type="synonym">Glycine hispida</name>
    <dbReference type="NCBI Taxonomy" id="3847"/>
    <lineage>
        <taxon>Eukaryota</taxon>
        <taxon>Viridiplantae</taxon>
        <taxon>Streptophyta</taxon>
        <taxon>Embryophyta</taxon>
        <taxon>Tracheophyta</taxon>
        <taxon>Spermatophyta</taxon>
        <taxon>Magnoliopsida</taxon>
        <taxon>eudicotyledons</taxon>
        <taxon>Gunneridae</taxon>
        <taxon>Pentapetalae</taxon>
        <taxon>rosids</taxon>
        <taxon>fabids</taxon>
        <taxon>Fabales</taxon>
        <taxon>Fabaceae</taxon>
        <taxon>Papilionoideae</taxon>
        <taxon>50 kb inversion clade</taxon>
        <taxon>NPAAA clade</taxon>
        <taxon>indigoferoid/millettioid clade</taxon>
        <taxon>Phaseoleae</taxon>
        <taxon>Glycine</taxon>
        <taxon>Glycine subgen. Soja</taxon>
    </lineage>
</organism>
<feature type="chain" id="PRO_0000127754" description="Small ribosomal subunit protein RACK1">
    <location>
        <begin position="1"/>
        <end position="325"/>
    </location>
</feature>
<feature type="repeat" description="WD 1">
    <location>
        <begin position="13"/>
        <end position="44"/>
    </location>
</feature>
<feature type="repeat" description="WD 2">
    <location>
        <begin position="61"/>
        <end position="91"/>
    </location>
</feature>
<feature type="repeat" description="WD 3">
    <location>
        <begin position="103"/>
        <end position="133"/>
    </location>
</feature>
<feature type="repeat" description="WD 4">
    <location>
        <begin position="147"/>
        <end position="179"/>
    </location>
</feature>
<feature type="repeat" description="WD 5">
    <location>
        <begin position="191"/>
        <end position="221"/>
    </location>
</feature>
<feature type="repeat" description="WD 6">
    <location>
        <begin position="232"/>
        <end position="261"/>
    </location>
</feature>
<feature type="repeat" description="WD 7">
    <location>
        <begin position="291"/>
        <end position="321"/>
    </location>
</feature>
<accession>Q39836</accession>
<comment type="similarity">
    <text evidence="1">Belongs to the WD repeat G protein beta family. Ribosomal protein RACK1 subfamily.</text>
</comment>
<evidence type="ECO:0000305" key="1"/>
<sequence>MAEGLVLKGTMRAHTDVVTAIATPIDNSDMIVTASRDRSIILWHLTKEDKTYGVPRRRLTGHSHFVQDVVLSSDGQFALSGSWDGELRLWDLAAGTSARRFVGHTKDVLSVAFSIDNRQIVSASRDRTIKLWNTLGECKYTIQDGDAHSDWVSCVRFSPSTLQPTIVSASWDRTVKVWNLTNCKLRNTLAGHNGYVNTVAVSPDGSLCASGGKDGVILLWDLAEGKRLYSLDAGSIIHALCFSPSRYWLCAATEQSIKIWDLESKSIVEDLKVDLKTEADATSGGGNANKKKVIYCTSLNWSADGSTLFSGYTDGVARVWAIGRY</sequence>
<name>GBLP_SOYBN</name>
<reference key="1">
    <citation type="submission" date="1996-01" db="EMBL/GenBank/DDBJ databases">
        <authorList>
            <person name="Nielsen N.C."/>
            <person name="Beilinson V."/>
            <person name="Bassuner R."/>
            <person name="Reverdatto S.V."/>
        </authorList>
    </citation>
    <scope>NUCLEOTIDE SEQUENCE [MRNA]</scope>
    <source>
        <strain>cv. Resnik</strain>
    </source>
</reference>
<keyword id="KW-1185">Reference proteome</keyword>
<keyword id="KW-0677">Repeat</keyword>
<keyword id="KW-0687">Ribonucleoprotein</keyword>
<keyword id="KW-0689">Ribosomal protein</keyword>
<keyword id="KW-0853">WD repeat</keyword>
<proteinExistence type="evidence at transcript level"/>
<dbReference type="EMBL" id="U44850">
    <property type="protein sequence ID" value="AAB05941.1"/>
    <property type="molecule type" value="mRNA"/>
</dbReference>
<dbReference type="PIR" id="T06784">
    <property type="entry name" value="T06784"/>
</dbReference>
<dbReference type="RefSeq" id="NP_001235369.1">
    <property type="nucleotide sequence ID" value="NM_001248440.2"/>
</dbReference>
<dbReference type="SMR" id="Q39836"/>
<dbReference type="FunCoup" id="Q39836">
    <property type="interactions" value="5379"/>
</dbReference>
<dbReference type="STRING" id="3847.Q39836"/>
<dbReference type="PaxDb" id="3847-GLYMA05G34070.1"/>
<dbReference type="ProMEX" id="Q39836"/>
<dbReference type="GeneID" id="547868"/>
<dbReference type="KEGG" id="gmx:547868"/>
<dbReference type="eggNOG" id="KOG0279">
    <property type="taxonomic scope" value="Eukaryota"/>
</dbReference>
<dbReference type="InParanoid" id="Q39836"/>
<dbReference type="OrthoDB" id="7875889at2759"/>
<dbReference type="Proteomes" id="UP000008827">
    <property type="component" value="Unplaced"/>
</dbReference>
<dbReference type="GO" id="GO:0005829">
    <property type="term" value="C:cytosol"/>
    <property type="evidence" value="ECO:0000318"/>
    <property type="project" value="GO_Central"/>
</dbReference>
<dbReference type="GO" id="GO:0005634">
    <property type="term" value="C:nucleus"/>
    <property type="evidence" value="ECO:0000318"/>
    <property type="project" value="GO_Central"/>
</dbReference>
<dbReference type="GO" id="GO:1990904">
    <property type="term" value="C:ribonucleoprotein complex"/>
    <property type="evidence" value="ECO:0007669"/>
    <property type="project" value="UniProtKB-KW"/>
</dbReference>
<dbReference type="GO" id="GO:0005840">
    <property type="term" value="C:ribosome"/>
    <property type="evidence" value="ECO:0007669"/>
    <property type="project" value="UniProtKB-KW"/>
</dbReference>
<dbReference type="GO" id="GO:0005080">
    <property type="term" value="F:protein kinase C binding"/>
    <property type="evidence" value="ECO:0000318"/>
    <property type="project" value="GO_Central"/>
</dbReference>
<dbReference type="GO" id="GO:0043022">
    <property type="term" value="F:ribosome binding"/>
    <property type="evidence" value="ECO:0000318"/>
    <property type="project" value="GO_Central"/>
</dbReference>
<dbReference type="GO" id="GO:0045182">
    <property type="term" value="F:translation regulator activity"/>
    <property type="evidence" value="ECO:0007669"/>
    <property type="project" value="InterPro"/>
</dbReference>
<dbReference type="GO" id="GO:2001125">
    <property type="term" value="P:negative regulation of translational frameshifting"/>
    <property type="evidence" value="ECO:0000318"/>
    <property type="project" value="GO_Central"/>
</dbReference>
<dbReference type="GO" id="GO:0072344">
    <property type="term" value="P:rescue of stalled ribosome"/>
    <property type="evidence" value="ECO:0000318"/>
    <property type="project" value="GO_Central"/>
</dbReference>
<dbReference type="CDD" id="cd00200">
    <property type="entry name" value="WD40"/>
    <property type="match status" value="1"/>
</dbReference>
<dbReference type="FunFam" id="2.130.10.10:FF:000018">
    <property type="entry name" value="Receptor for activated C kinase 1"/>
    <property type="match status" value="1"/>
</dbReference>
<dbReference type="Gene3D" id="2.130.10.10">
    <property type="entry name" value="YVTN repeat-like/Quinoprotein amine dehydrogenase"/>
    <property type="match status" value="1"/>
</dbReference>
<dbReference type="InterPro" id="IPR020472">
    <property type="entry name" value="G-protein_beta_WD-40_rep"/>
</dbReference>
<dbReference type="InterPro" id="IPR045223">
    <property type="entry name" value="RACK1-like"/>
</dbReference>
<dbReference type="InterPro" id="IPR015943">
    <property type="entry name" value="WD40/YVTN_repeat-like_dom_sf"/>
</dbReference>
<dbReference type="InterPro" id="IPR019775">
    <property type="entry name" value="WD40_repeat_CS"/>
</dbReference>
<dbReference type="InterPro" id="IPR036322">
    <property type="entry name" value="WD40_repeat_dom_sf"/>
</dbReference>
<dbReference type="InterPro" id="IPR001680">
    <property type="entry name" value="WD40_rpt"/>
</dbReference>
<dbReference type="PANTHER" id="PTHR19868">
    <property type="entry name" value="RECEPTOR FOR ACTIVATED PROTEIN KINASE C RACK1"/>
    <property type="match status" value="1"/>
</dbReference>
<dbReference type="Pfam" id="PF00400">
    <property type="entry name" value="WD40"/>
    <property type="match status" value="7"/>
</dbReference>
<dbReference type="PRINTS" id="PR00320">
    <property type="entry name" value="GPROTEINBRPT"/>
</dbReference>
<dbReference type="SMART" id="SM00320">
    <property type="entry name" value="WD40"/>
    <property type="match status" value="7"/>
</dbReference>
<dbReference type="SUPFAM" id="SSF50978">
    <property type="entry name" value="WD40 repeat-like"/>
    <property type="match status" value="1"/>
</dbReference>
<dbReference type="PROSITE" id="PS00678">
    <property type="entry name" value="WD_REPEATS_1"/>
    <property type="match status" value="4"/>
</dbReference>
<dbReference type="PROSITE" id="PS50082">
    <property type="entry name" value="WD_REPEATS_2"/>
    <property type="match status" value="6"/>
</dbReference>
<dbReference type="PROSITE" id="PS50294">
    <property type="entry name" value="WD_REPEATS_REGION"/>
    <property type="match status" value="1"/>
</dbReference>